<evidence type="ECO:0000250" key="1"/>
<evidence type="ECO:0000255" key="2">
    <source>
        <dbReference type="PROSITE-ProRule" id="PRU01082"/>
    </source>
</evidence>
<evidence type="ECO:0000256" key="3">
    <source>
        <dbReference type="SAM" id="MobiDB-lite"/>
    </source>
</evidence>
<evidence type="ECO:0000303" key="4">
    <source>
    </source>
</evidence>
<evidence type="ECO:0000305" key="5"/>
<gene>
    <name type="ordered locus">At1g79630</name>
    <name type="ORF">F20B17.6</name>
</gene>
<keyword id="KW-0025">Alternative splicing</keyword>
<keyword id="KW-0378">Hydrolase</keyword>
<keyword id="KW-0460">Magnesium</keyword>
<keyword id="KW-0464">Manganese</keyword>
<keyword id="KW-0479">Metal-binding</keyword>
<keyword id="KW-0904">Protein phosphatase</keyword>
<keyword id="KW-1185">Reference proteome</keyword>
<dbReference type="EC" id="3.1.3.16"/>
<dbReference type="EMBL" id="AC010793">
    <property type="protein sequence ID" value="AAF68125.1"/>
    <property type="status" value="ALT_SEQ"/>
    <property type="molecule type" value="Genomic_DNA"/>
</dbReference>
<dbReference type="EMBL" id="CP002684">
    <property type="protein sequence ID" value="AEE36275.1"/>
    <property type="molecule type" value="Genomic_DNA"/>
</dbReference>
<dbReference type="EMBL" id="CP002684">
    <property type="protein sequence ID" value="AEE36276.2"/>
    <property type="molecule type" value="Genomic_DNA"/>
</dbReference>
<dbReference type="EMBL" id="CP002684">
    <property type="protein sequence ID" value="ANM57733.1"/>
    <property type="molecule type" value="Genomic_DNA"/>
</dbReference>
<dbReference type="EMBL" id="CP002684">
    <property type="protein sequence ID" value="ANM57736.1"/>
    <property type="molecule type" value="Genomic_DNA"/>
</dbReference>
<dbReference type="EMBL" id="CP002684">
    <property type="protein sequence ID" value="ANM57737.1"/>
    <property type="molecule type" value="Genomic_DNA"/>
</dbReference>
<dbReference type="EMBL" id="AY080600">
    <property type="protein sequence ID" value="AAL85011.1"/>
    <property type="molecule type" value="mRNA"/>
</dbReference>
<dbReference type="EMBL" id="AY114037">
    <property type="protein sequence ID" value="AAM45085.1"/>
    <property type="molecule type" value="mRNA"/>
</dbReference>
<dbReference type="EMBL" id="BX814900">
    <property type="status" value="NOT_ANNOTATED_CDS"/>
    <property type="molecule type" value="mRNA"/>
</dbReference>
<dbReference type="PIR" id="E96827">
    <property type="entry name" value="E96827"/>
</dbReference>
<dbReference type="RefSeq" id="NP_001319418.1">
    <molecule id="Q8RXZ4-3"/>
    <property type="nucleotide sequence ID" value="NM_001334901.1"/>
</dbReference>
<dbReference type="RefSeq" id="NP_001320218.1">
    <molecule id="Q8RXZ4-3"/>
    <property type="nucleotide sequence ID" value="NM_001334903.1"/>
</dbReference>
<dbReference type="RefSeq" id="NP_001320221.1">
    <molecule id="Q8RXZ4-3"/>
    <property type="nucleotide sequence ID" value="NM_001334902.1"/>
</dbReference>
<dbReference type="RefSeq" id="NP_001320222.1">
    <molecule id="Q8RXZ4-3"/>
    <property type="nucleotide sequence ID" value="NM_001334904.1"/>
</dbReference>
<dbReference type="RefSeq" id="NP_178081.2">
    <molecule id="Q8RXZ4-1"/>
    <property type="nucleotide sequence ID" value="NM_106612.4"/>
</dbReference>
<dbReference type="SMR" id="Q8RXZ4"/>
<dbReference type="BioGRID" id="29520">
    <property type="interactions" value="2"/>
</dbReference>
<dbReference type="FunCoup" id="Q8RXZ4">
    <property type="interactions" value="783"/>
</dbReference>
<dbReference type="IntAct" id="Q8RXZ4">
    <property type="interactions" value="2"/>
</dbReference>
<dbReference type="MINT" id="Q8RXZ4"/>
<dbReference type="iPTMnet" id="Q8RXZ4"/>
<dbReference type="PaxDb" id="3702-AT1G79630.1"/>
<dbReference type="ProteomicsDB" id="248702">
    <molecule id="Q8RXZ4-1"/>
</dbReference>
<dbReference type="EnsemblPlants" id="AT1G79630.1">
    <molecule id="Q8RXZ4-1"/>
    <property type="protein sequence ID" value="AT1G79630.1"/>
    <property type="gene ID" value="AT1G79630"/>
</dbReference>
<dbReference type="EnsemblPlants" id="AT1G79630.3">
    <molecule id="Q8RXZ4-3"/>
    <property type="protein sequence ID" value="AT1G79630.3"/>
    <property type="gene ID" value="AT1G79630"/>
</dbReference>
<dbReference type="EnsemblPlants" id="AT1G79630.4">
    <molecule id="Q8RXZ4-3"/>
    <property type="protein sequence ID" value="AT1G79630.4"/>
    <property type="gene ID" value="AT1G79630"/>
</dbReference>
<dbReference type="EnsemblPlants" id="AT1G79630.5">
    <molecule id="Q8RXZ4-3"/>
    <property type="protein sequence ID" value="AT1G79630.5"/>
    <property type="gene ID" value="AT1G79630"/>
</dbReference>
<dbReference type="EnsemblPlants" id="AT1G79630.6">
    <molecule id="Q8RXZ4-3"/>
    <property type="protein sequence ID" value="AT1G79630.6"/>
    <property type="gene ID" value="AT1G79630"/>
</dbReference>
<dbReference type="GeneID" id="844302"/>
<dbReference type="Gramene" id="AT1G79630.1">
    <molecule id="Q8RXZ4-1"/>
    <property type="protein sequence ID" value="AT1G79630.1"/>
    <property type="gene ID" value="AT1G79630"/>
</dbReference>
<dbReference type="Gramene" id="AT1G79630.3">
    <molecule id="Q8RXZ4-3"/>
    <property type="protein sequence ID" value="AT1G79630.3"/>
    <property type="gene ID" value="AT1G79630"/>
</dbReference>
<dbReference type="Gramene" id="AT1G79630.4">
    <molecule id="Q8RXZ4-3"/>
    <property type="protein sequence ID" value="AT1G79630.4"/>
    <property type="gene ID" value="AT1G79630"/>
</dbReference>
<dbReference type="Gramene" id="AT1G79630.5">
    <molecule id="Q8RXZ4-3"/>
    <property type="protein sequence ID" value="AT1G79630.5"/>
    <property type="gene ID" value="AT1G79630"/>
</dbReference>
<dbReference type="Gramene" id="AT1G79630.6">
    <molecule id="Q8RXZ4-3"/>
    <property type="protein sequence ID" value="AT1G79630.6"/>
    <property type="gene ID" value="AT1G79630"/>
</dbReference>
<dbReference type="KEGG" id="ath:AT1G79630"/>
<dbReference type="Araport" id="AT1G79630"/>
<dbReference type="TAIR" id="AT1G79630"/>
<dbReference type="eggNOG" id="KOG0698">
    <property type="taxonomic scope" value="Eukaryota"/>
</dbReference>
<dbReference type="InParanoid" id="Q8RXZ4"/>
<dbReference type="OrthoDB" id="10264738at2759"/>
<dbReference type="PhylomeDB" id="Q8RXZ4"/>
<dbReference type="PRO" id="PR:Q8RXZ4"/>
<dbReference type="Proteomes" id="UP000006548">
    <property type="component" value="Chromosome 1"/>
</dbReference>
<dbReference type="ExpressionAtlas" id="Q8RXZ4">
    <property type="expression patterns" value="baseline and differential"/>
</dbReference>
<dbReference type="GO" id="GO:0046872">
    <property type="term" value="F:metal ion binding"/>
    <property type="evidence" value="ECO:0007669"/>
    <property type="project" value="UniProtKB-KW"/>
</dbReference>
<dbReference type="GO" id="GO:0004722">
    <property type="term" value="F:protein serine/threonine phosphatase activity"/>
    <property type="evidence" value="ECO:0007669"/>
    <property type="project" value="UniProtKB-EC"/>
</dbReference>
<dbReference type="CDD" id="cd00143">
    <property type="entry name" value="PP2Cc"/>
    <property type="match status" value="1"/>
</dbReference>
<dbReference type="FunFam" id="3.60.40.10:FF:000024">
    <property type="entry name" value="probable protein phosphatase 2C 33"/>
    <property type="match status" value="1"/>
</dbReference>
<dbReference type="Gene3D" id="3.60.40.10">
    <property type="entry name" value="PPM-type phosphatase domain"/>
    <property type="match status" value="1"/>
</dbReference>
<dbReference type="InterPro" id="IPR015655">
    <property type="entry name" value="PP2C"/>
</dbReference>
<dbReference type="InterPro" id="IPR036457">
    <property type="entry name" value="PPM-type-like_dom_sf"/>
</dbReference>
<dbReference type="InterPro" id="IPR001932">
    <property type="entry name" value="PPM-type_phosphatase-like_dom"/>
</dbReference>
<dbReference type="PANTHER" id="PTHR47992">
    <property type="entry name" value="PROTEIN PHOSPHATASE"/>
    <property type="match status" value="1"/>
</dbReference>
<dbReference type="Pfam" id="PF00481">
    <property type="entry name" value="PP2C"/>
    <property type="match status" value="1"/>
</dbReference>
<dbReference type="SMART" id="SM00332">
    <property type="entry name" value="PP2Cc"/>
    <property type="match status" value="1"/>
</dbReference>
<dbReference type="SUPFAM" id="SSF81606">
    <property type="entry name" value="PP2C-like"/>
    <property type="match status" value="1"/>
</dbReference>
<dbReference type="PROSITE" id="PS51746">
    <property type="entry name" value="PPM_2"/>
    <property type="match status" value="1"/>
</dbReference>
<reference key="1">
    <citation type="journal article" date="2000" name="Nature">
        <title>Sequence and analysis of chromosome 1 of the plant Arabidopsis thaliana.</title>
        <authorList>
            <person name="Theologis A."/>
            <person name="Ecker J.R."/>
            <person name="Palm C.J."/>
            <person name="Federspiel N.A."/>
            <person name="Kaul S."/>
            <person name="White O."/>
            <person name="Alonso J."/>
            <person name="Altafi H."/>
            <person name="Araujo R."/>
            <person name="Bowman C.L."/>
            <person name="Brooks S.Y."/>
            <person name="Buehler E."/>
            <person name="Chan A."/>
            <person name="Chao Q."/>
            <person name="Chen H."/>
            <person name="Cheuk R.F."/>
            <person name="Chin C.W."/>
            <person name="Chung M.K."/>
            <person name="Conn L."/>
            <person name="Conway A.B."/>
            <person name="Conway A.R."/>
            <person name="Creasy T.H."/>
            <person name="Dewar K."/>
            <person name="Dunn P."/>
            <person name="Etgu P."/>
            <person name="Feldblyum T.V."/>
            <person name="Feng J.-D."/>
            <person name="Fong B."/>
            <person name="Fujii C.Y."/>
            <person name="Gill J.E."/>
            <person name="Goldsmith A.D."/>
            <person name="Haas B."/>
            <person name="Hansen N.F."/>
            <person name="Hughes B."/>
            <person name="Huizar L."/>
            <person name="Hunter J.L."/>
            <person name="Jenkins J."/>
            <person name="Johnson-Hopson C."/>
            <person name="Khan S."/>
            <person name="Khaykin E."/>
            <person name="Kim C.J."/>
            <person name="Koo H.L."/>
            <person name="Kremenetskaia I."/>
            <person name="Kurtz D.B."/>
            <person name="Kwan A."/>
            <person name="Lam B."/>
            <person name="Langin-Hooper S."/>
            <person name="Lee A."/>
            <person name="Lee J.M."/>
            <person name="Lenz C.A."/>
            <person name="Li J.H."/>
            <person name="Li Y.-P."/>
            <person name="Lin X."/>
            <person name="Liu S.X."/>
            <person name="Liu Z.A."/>
            <person name="Luros J.S."/>
            <person name="Maiti R."/>
            <person name="Marziali A."/>
            <person name="Militscher J."/>
            <person name="Miranda M."/>
            <person name="Nguyen M."/>
            <person name="Nierman W.C."/>
            <person name="Osborne B.I."/>
            <person name="Pai G."/>
            <person name="Peterson J."/>
            <person name="Pham P.K."/>
            <person name="Rizzo M."/>
            <person name="Rooney T."/>
            <person name="Rowley D."/>
            <person name="Sakano H."/>
            <person name="Salzberg S.L."/>
            <person name="Schwartz J.R."/>
            <person name="Shinn P."/>
            <person name="Southwick A.M."/>
            <person name="Sun H."/>
            <person name="Tallon L.J."/>
            <person name="Tambunga G."/>
            <person name="Toriumi M.J."/>
            <person name="Town C.D."/>
            <person name="Utterback T."/>
            <person name="Van Aken S."/>
            <person name="Vaysberg M."/>
            <person name="Vysotskaia V.S."/>
            <person name="Walker M."/>
            <person name="Wu D."/>
            <person name="Yu G."/>
            <person name="Fraser C.M."/>
            <person name="Venter J.C."/>
            <person name="Davis R.W."/>
        </authorList>
    </citation>
    <scope>NUCLEOTIDE SEQUENCE [LARGE SCALE GENOMIC DNA]</scope>
    <source>
        <strain>cv. Columbia</strain>
    </source>
</reference>
<reference key="2">
    <citation type="journal article" date="2017" name="Plant J.">
        <title>Araport11: a complete reannotation of the Arabidopsis thaliana reference genome.</title>
        <authorList>
            <person name="Cheng C.Y."/>
            <person name="Krishnakumar V."/>
            <person name="Chan A.P."/>
            <person name="Thibaud-Nissen F."/>
            <person name="Schobel S."/>
            <person name="Town C.D."/>
        </authorList>
    </citation>
    <scope>GENOME REANNOTATION</scope>
    <source>
        <strain>cv. Columbia</strain>
    </source>
</reference>
<reference key="3">
    <citation type="journal article" date="2003" name="Science">
        <title>Empirical analysis of transcriptional activity in the Arabidopsis genome.</title>
        <authorList>
            <person name="Yamada K."/>
            <person name="Lim J."/>
            <person name="Dale J.M."/>
            <person name="Chen H."/>
            <person name="Shinn P."/>
            <person name="Palm C.J."/>
            <person name="Southwick A.M."/>
            <person name="Wu H.C."/>
            <person name="Kim C.J."/>
            <person name="Nguyen M."/>
            <person name="Pham P.K."/>
            <person name="Cheuk R.F."/>
            <person name="Karlin-Newmann G."/>
            <person name="Liu S.X."/>
            <person name="Lam B."/>
            <person name="Sakano H."/>
            <person name="Wu T."/>
            <person name="Yu G."/>
            <person name="Miranda M."/>
            <person name="Quach H.L."/>
            <person name="Tripp M."/>
            <person name="Chang C.H."/>
            <person name="Lee J.M."/>
            <person name="Toriumi M.J."/>
            <person name="Chan M.M."/>
            <person name="Tang C.C."/>
            <person name="Onodera C.S."/>
            <person name="Deng J.M."/>
            <person name="Akiyama K."/>
            <person name="Ansari Y."/>
            <person name="Arakawa T."/>
            <person name="Banh J."/>
            <person name="Banno F."/>
            <person name="Bowser L."/>
            <person name="Brooks S.Y."/>
            <person name="Carninci P."/>
            <person name="Chao Q."/>
            <person name="Choy N."/>
            <person name="Enju A."/>
            <person name="Goldsmith A.D."/>
            <person name="Gurjal M."/>
            <person name="Hansen N.F."/>
            <person name="Hayashizaki Y."/>
            <person name="Johnson-Hopson C."/>
            <person name="Hsuan V.W."/>
            <person name="Iida K."/>
            <person name="Karnes M."/>
            <person name="Khan S."/>
            <person name="Koesema E."/>
            <person name="Ishida J."/>
            <person name="Jiang P.X."/>
            <person name="Jones T."/>
            <person name="Kawai J."/>
            <person name="Kamiya A."/>
            <person name="Meyers C."/>
            <person name="Nakajima M."/>
            <person name="Narusaka M."/>
            <person name="Seki M."/>
            <person name="Sakurai T."/>
            <person name="Satou M."/>
            <person name="Tamse R."/>
            <person name="Vaysberg M."/>
            <person name="Wallender E.K."/>
            <person name="Wong C."/>
            <person name="Yamamura Y."/>
            <person name="Yuan S."/>
            <person name="Shinozaki K."/>
            <person name="Davis R.W."/>
            <person name="Theologis A."/>
            <person name="Ecker J.R."/>
        </authorList>
    </citation>
    <scope>NUCLEOTIDE SEQUENCE [LARGE SCALE MRNA] (ISOFORM 1)</scope>
    <source>
        <strain>cv. Columbia</strain>
    </source>
</reference>
<reference key="4">
    <citation type="journal article" date="2004" name="Genome Res.">
        <title>Whole genome sequence comparisons and 'full-length' cDNA sequences: a combined approach to evaluate and improve Arabidopsis genome annotation.</title>
        <authorList>
            <person name="Castelli V."/>
            <person name="Aury J.-M."/>
            <person name="Jaillon O."/>
            <person name="Wincker P."/>
            <person name="Clepet C."/>
            <person name="Menard M."/>
            <person name="Cruaud C."/>
            <person name="Quetier F."/>
            <person name="Scarpelli C."/>
            <person name="Schaechter V."/>
            <person name="Temple G."/>
            <person name="Caboche M."/>
            <person name="Weissenbach J."/>
            <person name="Salanoubat M."/>
        </authorList>
    </citation>
    <scope>NUCLEOTIDE SEQUENCE [LARGE SCALE MRNA] (ISOFORM 2)</scope>
    <source>
        <strain>cv. Columbia</strain>
    </source>
</reference>
<reference key="5">
    <citation type="journal article" date="2008" name="BMC Genomics">
        <title>Genome-wide and expression analysis of protein phosphatase 2C in rice and Arabidopsis.</title>
        <authorList>
            <person name="Xue T."/>
            <person name="Wang D."/>
            <person name="Zhang S."/>
            <person name="Ehlting J."/>
            <person name="Ni F."/>
            <person name="Jacab S."/>
            <person name="Zheng C."/>
            <person name="Zhong Y."/>
        </authorList>
    </citation>
    <scope>GENE FAMILY</scope>
    <scope>NOMENCLATURE</scope>
</reference>
<proteinExistence type="evidence at transcript level"/>
<sequence>MGLCYSVDRTTGKEPGEASSTATTAETVEERSGSGRWRRPRDLKGGGDIEGIPQVLGRLVSNGSSKIACLYTQQGKKGTNQDAMLVFENFCSRDDTVFCGVFDGHGPFGHMVAKKVRDTLPFTLLTQLKMTSESDQSSLVGANGFQIKCTEEEEVQTTESEQVQKTESVTTMDEQWCELNPNVNNDELPEMYLPLKHAMLKSCQQIDKELKMHPTIDCFCSGTTSVTLIKQGEDLVVGNIGDSRAVLATRDEDNALLAVQLTIDLKPDLPGESARIQKCKGRVFALQDEPEVARVWLPNSDSPGLAMARAFGDFCLKDYGLISVPDINYRRLTERDQFIILASDGVWDVLSNKEAVDIVASAPSRSTAARALVDTAVRSWRIKYPTSKNDDCTVVCLFLQDSSVAMEVSTNVKKDSPKEESIESVTNSTSKEEDEIVPVKDEKIPESCGIESKMMTMTLAECISVAQDDEEWSALEGLTRVNSLLSIPRFLSGELRSTSWRKWL</sequence>
<feature type="chain" id="PRO_0000367948" description="Probable protein phosphatase 2C 18">
    <location>
        <begin position="1"/>
        <end position="504"/>
    </location>
</feature>
<feature type="domain" description="PPM-type phosphatase" evidence="2">
    <location>
        <begin position="67"/>
        <end position="399"/>
    </location>
</feature>
<feature type="region of interest" description="Disordered" evidence="3">
    <location>
        <begin position="1"/>
        <end position="49"/>
    </location>
</feature>
<feature type="region of interest" description="Disordered" evidence="3">
    <location>
        <begin position="410"/>
        <end position="435"/>
    </location>
</feature>
<feature type="compositionally biased region" description="Low complexity" evidence="3">
    <location>
        <begin position="17"/>
        <end position="26"/>
    </location>
</feature>
<feature type="compositionally biased region" description="Basic and acidic residues" evidence="3">
    <location>
        <begin position="412"/>
        <end position="421"/>
    </location>
</feature>
<feature type="binding site" evidence="1">
    <location>
        <position position="103"/>
    </location>
    <ligand>
        <name>Mn(2+)</name>
        <dbReference type="ChEBI" id="CHEBI:29035"/>
        <label>1</label>
    </ligand>
</feature>
<feature type="binding site" evidence="1">
    <location>
        <position position="103"/>
    </location>
    <ligand>
        <name>Mn(2+)</name>
        <dbReference type="ChEBI" id="CHEBI:29035"/>
        <label>2</label>
    </ligand>
</feature>
<feature type="binding site" evidence="1">
    <location>
        <position position="104"/>
    </location>
    <ligand>
        <name>Mn(2+)</name>
        <dbReference type="ChEBI" id="CHEBI:29035"/>
        <label>1</label>
    </ligand>
</feature>
<feature type="binding site" evidence="1">
    <location>
        <position position="344"/>
    </location>
    <ligand>
        <name>Mn(2+)</name>
        <dbReference type="ChEBI" id="CHEBI:29035"/>
        <label>2</label>
    </ligand>
</feature>
<feature type="binding site" evidence="1">
    <location>
        <position position="390"/>
    </location>
    <ligand>
        <name>Mn(2+)</name>
        <dbReference type="ChEBI" id="CHEBI:29035"/>
        <label>2</label>
    </ligand>
</feature>
<feature type="splice variant" id="VSP_036761" description="In isoform 2." evidence="4">
    <location>
        <begin position="1"/>
        <end position="110"/>
    </location>
</feature>
<organism>
    <name type="scientific">Arabidopsis thaliana</name>
    <name type="common">Mouse-ear cress</name>
    <dbReference type="NCBI Taxonomy" id="3702"/>
    <lineage>
        <taxon>Eukaryota</taxon>
        <taxon>Viridiplantae</taxon>
        <taxon>Streptophyta</taxon>
        <taxon>Embryophyta</taxon>
        <taxon>Tracheophyta</taxon>
        <taxon>Spermatophyta</taxon>
        <taxon>Magnoliopsida</taxon>
        <taxon>eudicotyledons</taxon>
        <taxon>Gunneridae</taxon>
        <taxon>Pentapetalae</taxon>
        <taxon>rosids</taxon>
        <taxon>malvids</taxon>
        <taxon>Brassicales</taxon>
        <taxon>Brassicaceae</taxon>
        <taxon>Camelineae</taxon>
        <taxon>Arabidopsis</taxon>
    </lineage>
</organism>
<name>P2C18_ARATH</name>
<protein>
    <recommendedName>
        <fullName>Probable protein phosphatase 2C 18</fullName>
        <shortName>AtPP2C18</shortName>
        <ecNumber>3.1.3.16</ecNumber>
    </recommendedName>
</protein>
<comment type="catalytic activity">
    <reaction>
        <text>O-phospho-L-seryl-[protein] + H2O = L-seryl-[protein] + phosphate</text>
        <dbReference type="Rhea" id="RHEA:20629"/>
        <dbReference type="Rhea" id="RHEA-COMP:9863"/>
        <dbReference type="Rhea" id="RHEA-COMP:11604"/>
        <dbReference type="ChEBI" id="CHEBI:15377"/>
        <dbReference type="ChEBI" id="CHEBI:29999"/>
        <dbReference type="ChEBI" id="CHEBI:43474"/>
        <dbReference type="ChEBI" id="CHEBI:83421"/>
        <dbReference type="EC" id="3.1.3.16"/>
    </reaction>
</comment>
<comment type="catalytic activity">
    <reaction>
        <text>O-phospho-L-threonyl-[protein] + H2O = L-threonyl-[protein] + phosphate</text>
        <dbReference type="Rhea" id="RHEA:47004"/>
        <dbReference type="Rhea" id="RHEA-COMP:11060"/>
        <dbReference type="Rhea" id="RHEA-COMP:11605"/>
        <dbReference type="ChEBI" id="CHEBI:15377"/>
        <dbReference type="ChEBI" id="CHEBI:30013"/>
        <dbReference type="ChEBI" id="CHEBI:43474"/>
        <dbReference type="ChEBI" id="CHEBI:61977"/>
        <dbReference type="EC" id="3.1.3.16"/>
    </reaction>
</comment>
<comment type="cofactor">
    <cofactor evidence="1">
        <name>Mg(2+)</name>
        <dbReference type="ChEBI" id="CHEBI:18420"/>
    </cofactor>
    <cofactor evidence="1">
        <name>Mn(2+)</name>
        <dbReference type="ChEBI" id="CHEBI:29035"/>
    </cofactor>
    <text evidence="1">Binds 2 magnesium or manganese ions per subunit.</text>
</comment>
<comment type="alternative products">
    <event type="alternative splicing"/>
    <isoform>
        <id>Q8RXZ4-1</id>
        <name>1</name>
        <sequence type="displayed"/>
    </isoform>
    <isoform>
        <id>Q8RXZ4-3</id>
        <name>2</name>
        <sequence type="described" ref="VSP_036761"/>
    </isoform>
</comment>
<comment type="similarity">
    <text evidence="5">Belongs to the PP2C family.</text>
</comment>
<comment type="sequence caution" evidence="5">
    <conflict type="erroneous gene model prediction">
        <sequence resource="EMBL-CDS" id="AAF68125"/>
    </conflict>
</comment>
<comment type="sequence caution" evidence="5">
    <conflict type="miscellaneous discrepancy">
        <sequence resource="EMBL" id="BX814900"/>
    </conflict>
    <text>Sequencing errors.</text>
</comment>
<accession>Q8RXZ4</accession>
<accession>Q2V4C0</accession>
<accession>Q3ECA6</accession>
<accession>Q9MA12</accession>